<evidence type="ECO:0000250" key="1"/>
<evidence type="ECO:0000255" key="2"/>
<evidence type="ECO:0000305" key="3"/>
<evidence type="ECO:0007829" key="4">
    <source>
        <dbReference type="PDB" id="5HTF"/>
    </source>
</evidence>
<proteinExistence type="evidence at protein level"/>
<organism>
    <name type="scientific">Listeria monocytogenes serovar 1/2a (strain ATCC BAA-679 / EGD-e)</name>
    <dbReference type="NCBI Taxonomy" id="169963"/>
    <lineage>
        <taxon>Bacteria</taxon>
        <taxon>Bacillati</taxon>
        <taxon>Bacillota</taxon>
        <taxon>Bacilli</taxon>
        <taxon>Bacillales</taxon>
        <taxon>Listeriaceae</taxon>
        <taxon>Listeria</taxon>
    </lineage>
</organism>
<name>PRSA1_LISMO</name>
<keyword id="KW-0002">3D-structure</keyword>
<keyword id="KW-1003">Cell membrane</keyword>
<keyword id="KW-0413">Isomerase</keyword>
<keyword id="KW-0449">Lipoprotein</keyword>
<keyword id="KW-0472">Membrane</keyword>
<keyword id="KW-0564">Palmitate</keyword>
<keyword id="KW-1185">Reference proteome</keyword>
<keyword id="KW-0697">Rotamase</keyword>
<keyword id="KW-0732">Signal</keyword>
<sequence>MTKLKKVMISVIAATLLLLAGCGSSAVIKTDAGSVTQDELYEAMKTTYGNEVVQQLTFKKILEDKYTVTEKEVNAEYKKYEEQYGDSFESTLSSNNLTKTSFKENLEYNLLVQKATEANMDVSESKLKAYYKTWEPDITVRHILVDDEATAKEIQTKLKNGEKFTDLAKEYSTDTATSTNGGLLDPFGPGEMDETFEKAAYALENKDDVSGIVKSTYGYHLIQLVKKTEKGTYAKEKANVKAAYIKSQLTSENMTAALKKELKAANIDIKDSDLKDAFADYTSTSSTSSTTTSN</sequence>
<dbReference type="EC" id="5.2.1.8"/>
<dbReference type="EMBL" id="AL591979">
    <property type="protein sequence ID" value="CAC99522.1"/>
    <property type="molecule type" value="Genomic_DNA"/>
</dbReference>
<dbReference type="PIR" id="AD1255">
    <property type="entry name" value="AD1255"/>
</dbReference>
<dbReference type="RefSeq" id="NP_464969.1">
    <property type="nucleotide sequence ID" value="NC_003210.1"/>
</dbReference>
<dbReference type="RefSeq" id="WP_003721949.1">
    <property type="nucleotide sequence ID" value="NZ_CP149495.1"/>
</dbReference>
<dbReference type="PDB" id="5HTF">
    <property type="method" value="X-ray"/>
    <property type="resolution" value="2.10 A"/>
    <property type="chains" value="A/B=22-294"/>
</dbReference>
<dbReference type="PDBsum" id="5HTF"/>
<dbReference type="SMR" id="Q8Y759"/>
<dbReference type="STRING" id="169963.gene:17594101"/>
<dbReference type="PaxDb" id="169963-lmo1444"/>
<dbReference type="EnsemblBacteria" id="CAC99522">
    <property type="protein sequence ID" value="CAC99522"/>
    <property type="gene ID" value="CAC99522"/>
</dbReference>
<dbReference type="GeneID" id="986457"/>
<dbReference type="KEGG" id="lmo:lmo1444"/>
<dbReference type="PATRIC" id="fig|169963.11.peg.1483"/>
<dbReference type="eggNOG" id="COG0760">
    <property type="taxonomic scope" value="Bacteria"/>
</dbReference>
<dbReference type="HOGENOM" id="CLU_034646_6_1_9"/>
<dbReference type="OrthoDB" id="14196at2"/>
<dbReference type="PhylomeDB" id="Q8Y759"/>
<dbReference type="BioCyc" id="LMON169963:LMO1444-MONOMER"/>
<dbReference type="PHI-base" id="PHI:123455"/>
<dbReference type="Proteomes" id="UP000000817">
    <property type="component" value="Chromosome"/>
</dbReference>
<dbReference type="GO" id="GO:0005886">
    <property type="term" value="C:plasma membrane"/>
    <property type="evidence" value="ECO:0007669"/>
    <property type="project" value="UniProtKB-SubCell"/>
</dbReference>
<dbReference type="GO" id="GO:0003755">
    <property type="term" value="F:peptidyl-prolyl cis-trans isomerase activity"/>
    <property type="evidence" value="ECO:0007669"/>
    <property type="project" value="UniProtKB-UniRule"/>
</dbReference>
<dbReference type="GO" id="GO:0006457">
    <property type="term" value="P:protein folding"/>
    <property type="evidence" value="ECO:0007669"/>
    <property type="project" value="UniProtKB-UniRule"/>
</dbReference>
<dbReference type="FunFam" id="3.10.50.40:FF:000042">
    <property type="entry name" value="Foldase protein PrsA"/>
    <property type="match status" value="1"/>
</dbReference>
<dbReference type="Gene3D" id="3.10.50.40">
    <property type="match status" value="1"/>
</dbReference>
<dbReference type="HAMAP" id="MF_01145">
    <property type="entry name" value="Foldase_PrsA"/>
    <property type="match status" value="1"/>
</dbReference>
<dbReference type="InterPro" id="IPR023059">
    <property type="entry name" value="Foldase_PrsA"/>
</dbReference>
<dbReference type="InterPro" id="IPR046357">
    <property type="entry name" value="PPIase_dom_sf"/>
</dbReference>
<dbReference type="InterPro" id="IPR000297">
    <property type="entry name" value="PPIase_PpiC"/>
</dbReference>
<dbReference type="InterPro" id="IPR050245">
    <property type="entry name" value="PrsA_foldase"/>
</dbReference>
<dbReference type="InterPro" id="IPR027304">
    <property type="entry name" value="Trigger_fact/SurA_dom_sf"/>
</dbReference>
<dbReference type="PANTHER" id="PTHR47245:SF1">
    <property type="entry name" value="FOLDASE PROTEIN PRSA"/>
    <property type="match status" value="1"/>
</dbReference>
<dbReference type="PANTHER" id="PTHR47245">
    <property type="entry name" value="PEPTIDYLPROLYL ISOMERASE"/>
    <property type="match status" value="1"/>
</dbReference>
<dbReference type="Pfam" id="PF13616">
    <property type="entry name" value="Rotamase_3"/>
    <property type="match status" value="1"/>
</dbReference>
<dbReference type="SUPFAM" id="SSF54534">
    <property type="entry name" value="FKBP-like"/>
    <property type="match status" value="1"/>
</dbReference>
<dbReference type="SUPFAM" id="SSF109998">
    <property type="entry name" value="Triger factor/SurA peptide-binding domain-like"/>
    <property type="match status" value="1"/>
</dbReference>
<dbReference type="PROSITE" id="PS50198">
    <property type="entry name" value="PPIC_PPIASE_2"/>
    <property type="match status" value="1"/>
</dbReference>
<dbReference type="PROSITE" id="PS51257">
    <property type="entry name" value="PROKAR_LIPOPROTEIN"/>
    <property type="match status" value="1"/>
</dbReference>
<accession>Q8Y759</accession>
<reference key="1">
    <citation type="journal article" date="2001" name="Science">
        <title>Comparative genomics of Listeria species.</title>
        <authorList>
            <person name="Glaser P."/>
            <person name="Frangeul L."/>
            <person name="Buchrieser C."/>
            <person name="Rusniok C."/>
            <person name="Amend A."/>
            <person name="Baquero F."/>
            <person name="Berche P."/>
            <person name="Bloecker H."/>
            <person name="Brandt P."/>
            <person name="Chakraborty T."/>
            <person name="Charbit A."/>
            <person name="Chetouani F."/>
            <person name="Couve E."/>
            <person name="de Daruvar A."/>
            <person name="Dehoux P."/>
            <person name="Domann E."/>
            <person name="Dominguez-Bernal G."/>
            <person name="Duchaud E."/>
            <person name="Durant L."/>
            <person name="Dussurget O."/>
            <person name="Entian K.-D."/>
            <person name="Fsihi H."/>
            <person name="Garcia-del Portillo F."/>
            <person name="Garrido P."/>
            <person name="Gautier L."/>
            <person name="Goebel W."/>
            <person name="Gomez-Lopez N."/>
            <person name="Hain T."/>
            <person name="Hauf J."/>
            <person name="Jackson D."/>
            <person name="Jones L.-M."/>
            <person name="Kaerst U."/>
            <person name="Kreft J."/>
            <person name="Kuhn M."/>
            <person name="Kunst F."/>
            <person name="Kurapkat G."/>
            <person name="Madueno E."/>
            <person name="Maitournam A."/>
            <person name="Mata Vicente J."/>
            <person name="Ng E."/>
            <person name="Nedjari H."/>
            <person name="Nordsiek G."/>
            <person name="Novella S."/>
            <person name="de Pablos B."/>
            <person name="Perez-Diaz J.-C."/>
            <person name="Purcell R."/>
            <person name="Remmel B."/>
            <person name="Rose M."/>
            <person name="Schlueter T."/>
            <person name="Simoes N."/>
            <person name="Tierrez A."/>
            <person name="Vazquez-Boland J.-A."/>
            <person name="Voss H."/>
            <person name="Wehland J."/>
            <person name="Cossart P."/>
        </authorList>
    </citation>
    <scope>NUCLEOTIDE SEQUENCE [LARGE SCALE GENOMIC DNA]</scope>
    <source>
        <strain>ATCC BAA-679 / EGD-e</strain>
    </source>
</reference>
<feature type="signal peptide" evidence="2">
    <location>
        <begin position="1"/>
        <end position="21"/>
    </location>
</feature>
<feature type="chain" id="PRO_0000029313" description="Foldase protein PrsA 1">
    <location>
        <begin position="22"/>
        <end position="294"/>
    </location>
</feature>
<feature type="domain" description="PpiC">
    <location>
        <begin position="135"/>
        <end position="226"/>
    </location>
</feature>
<feature type="lipid moiety-binding region" description="N-palmitoyl cysteine" evidence="2">
    <location>
        <position position="22"/>
    </location>
</feature>
<feature type="lipid moiety-binding region" description="S-diacylglycerol cysteine" evidence="2">
    <location>
        <position position="22"/>
    </location>
</feature>
<feature type="strand" evidence="4">
    <location>
        <begin position="25"/>
        <end position="30"/>
    </location>
</feature>
<feature type="strand" evidence="4">
    <location>
        <begin position="33"/>
        <end position="36"/>
    </location>
</feature>
<feature type="helix" evidence="4">
    <location>
        <begin position="37"/>
        <end position="65"/>
    </location>
</feature>
<feature type="helix" evidence="4">
    <location>
        <begin position="70"/>
        <end position="84"/>
    </location>
</feature>
<feature type="helix" evidence="4">
    <location>
        <begin position="85"/>
        <end position="87"/>
    </location>
</feature>
<feature type="helix" evidence="4">
    <location>
        <begin position="88"/>
        <end position="94"/>
    </location>
</feature>
<feature type="helix" evidence="4">
    <location>
        <begin position="99"/>
        <end position="117"/>
    </location>
</feature>
<feature type="helix" evidence="4">
    <location>
        <begin position="124"/>
        <end position="133"/>
    </location>
</feature>
<feature type="strand" evidence="4">
    <location>
        <begin position="138"/>
        <end position="147"/>
    </location>
</feature>
<feature type="helix" evidence="4">
    <location>
        <begin position="148"/>
        <end position="160"/>
    </location>
</feature>
<feature type="helix" evidence="4">
    <location>
        <begin position="164"/>
        <end position="171"/>
    </location>
</feature>
<feature type="turn" evidence="4">
    <location>
        <begin position="175"/>
        <end position="177"/>
    </location>
</feature>
<feature type="helix" evidence="4">
    <location>
        <begin position="178"/>
        <end position="180"/>
    </location>
</feature>
<feature type="helix" evidence="4">
    <location>
        <begin position="194"/>
        <end position="201"/>
    </location>
</feature>
<feature type="strand" evidence="4">
    <location>
        <begin position="219"/>
        <end position="226"/>
    </location>
</feature>
<feature type="helix" evidence="4">
    <location>
        <begin position="233"/>
        <end position="247"/>
    </location>
</feature>
<feature type="helix" evidence="4">
    <location>
        <begin position="251"/>
        <end position="265"/>
    </location>
</feature>
<feature type="helix" evidence="4">
    <location>
        <begin position="272"/>
        <end position="274"/>
    </location>
</feature>
<feature type="turn" evidence="4">
    <location>
        <begin position="275"/>
        <end position="278"/>
    </location>
</feature>
<feature type="helix" evidence="4">
    <location>
        <begin position="279"/>
        <end position="281"/>
    </location>
</feature>
<feature type="strand" evidence="4">
    <location>
        <begin position="283"/>
        <end position="287"/>
    </location>
</feature>
<protein>
    <recommendedName>
        <fullName>Foldase protein PrsA 1</fullName>
        <ecNumber>5.2.1.8</ecNumber>
    </recommendedName>
</protein>
<comment type="function">
    <text evidence="1">Plays a major role in protein secretion by helping the post-translocational extracellular folding of several secreted proteins.</text>
</comment>
<comment type="catalytic activity">
    <reaction>
        <text>[protein]-peptidylproline (omega=180) = [protein]-peptidylproline (omega=0)</text>
        <dbReference type="Rhea" id="RHEA:16237"/>
        <dbReference type="Rhea" id="RHEA-COMP:10747"/>
        <dbReference type="Rhea" id="RHEA-COMP:10748"/>
        <dbReference type="ChEBI" id="CHEBI:83833"/>
        <dbReference type="ChEBI" id="CHEBI:83834"/>
        <dbReference type="EC" id="5.2.1.8"/>
    </reaction>
</comment>
<comment type="subcellular location">
    <subcellularLocation>
        <location evidence="3">Cell membrane</location>
        <topology evidence="3">Lipid-anchor</topology>
    </subcellularLocation>
</comment>
<comment type="similarity">
    <text evidence="3">Belongs to the PrsA family.</text>
</comment>
<gene>
    <name type="primary">prsA1</name>
    <name type="ordered locus">lmo1444</name>
</gene>